<name>RS2_ROSS1</name>
<dbReference type="EMBL" id="CP000686">
    <property type="protein sequence ID" value="ABQ90405.1"/>
    <property type="molecule type" value="Genomic_DNA"/>
</dbReference>
<dbReference type="RefSeq" id="WP_011956751.1">
    <property type="nucleotide sequence ID" value="NC_009523.1"/>
</dbReference>
<dbReference type="SMR" id="A5UUV2"/>
<dbReference type="STRING" id="357808.RoseRS_2019"/>
<dbReference type="KEGG" id="rrs:RoseRS_2019"/>
<dbReference type="eggNOG" id="COG0052">
    <property type="taxonomic scope" value="Bacteria"/>
</dbReference>
<dbReference type="HOGENOM" id="CLU_040318_1_2_0"/>
<dbReference type="OrthoDB" id="9808036at2"/>
<dbReference type="Proteomes" id="UP000006554">
    <property type="component" value="Chromosome"/>
</dbReference>
<dbReference type="GO" id="GO:0022627">
    <property type="term" value="C:cytosolic small ribosomal subunit"/>
    <property type="evidence" value="ECO:0007669"/>
    <property type="project" value="TreeGrafter"/>
</dbReference>
<dbReference type="GO" id="GO:0003735">
    <property type="term" value="F:structural constituent of ribosome"/>
    <property type="evidence" value="ECO:0007669"/>
    <property type="project" value="InterPro"/>
</dbReference>
<dbReference type="GO" id="GO:0006412">
    <property type="term" value="P:translation"/>
    <property type="evidence" value="ECO:0007669"/>
    <property type="project" value="UniProtKB-UniRule"/>
</dbReference>
<dbReference type="CDD" id="cd01425">
    <property type="entry name" value="RPS2"/>
    <property type="match status" value="1"/>
</dbReference>
<dbReference type="FunFam" id="1.10.287.610:FF:000001">
    <property type="entry name" value="30S ribosomal protein S2"/>
    <property type="match status" value="1"/>
</dbReference>
<dbReference type="Gene3D" id="3.40.50.10490">
    <property type="entry name" value="Glucose-6-phosphate isomerase like protein, domain 1"/>
    <property type="match status" value="1"/>
</dbReference>
<dbReference type="Gene3D" id="1.10.287.610">
    <property type="entry name" value="Helix hairpin bin"/>
    <property type="match status" value="1"/>
</dbReference>
<dbReference type="HAMAP" id="MF_00291_B">
    <property type="entry name" value="Ribosomal_uS2_B"/>
    <property type="match status" value="1"/>
</dbReference>
<dbReference type="InterPro" id="IPR001865">
    <property type="entry name" value="Ribosomal_uS2"/>
</dbReference>
<dbReference type="InterPro" id="IPR005706">
    <property type="entry name" value="Ribosomal_uS2_bac/mit/plastid"/>
</dbReference>
<dbReference type="InterPro" id="IPR018130">
    <property type="entry name" value="Ribosomal_uS2_CS"/>
</dbReference>
<dbReference type="InterPro" id="IPR023591">
    <property type="entry name" value="Ribosomal_uS2_flav_dom_sf"/>
</dbReference>
<dbReference type="NCBIfam" id="TIGR01011">
    <property type="entry name" value="rpsB_bact"/>
    <property type="match status" value="1"/>
</dbReference>
<dbReference type="PANTHER" id="PTHR12534">
    <property type="entry name" value="30S RIBOSOMAL PROTEIN S2 PROKARYOTIC AND ORGANELLAR"/>
    <property type="match status" value="1"/>
</dbReference>
<dbReference type="PANTHER" id="PTHR12534:SF0">
    <property type="entry name" value="SMALL RIBOSOMAL SUBUNIT PROTEIN US2M"/>
    <property type="match status" value="1"/>
</dbReference>
<dbReference type="Pfam" id="PF00318">
    <property type="entry name" value="Ribosomal_S2"/>
    <property type="match status" value="1"/>
</dbReference>
<dbReference type="PRINTS" id="PR00395">
    <property type="entry name" value="RIBOSOMALS2"/>
</dbReference>
<dbReference type="SUPFAM" id="SSF52313">
    <property type="entry name" value="Ribosomal protein S2"/>
    <property type="match status" value="1"/>
</dbReference>
<dbReference type="PROSITE" id="PS00962">
    <property type="entry name" value="RIBOSOMAL_S2_1"/>
    <property type="match status" value="1"/>
</dbReference>
<dbReference type="PROSITE" id="PS00963">
    <property type="entry name" value="RIBOSOMAL_S2_2"/>
    <property type="match status" value="1"/>
</dbReference>
<protein>
    <recommendedName>
        <fullName evidence="1">Small ribosomal subunit protein uS2</fullName>
    </recommendedName>
    <alternativeName>
        <fullName evidence="2">30S ribosomal protein S2</fullName>
    </alternativeName>
</protein>
<comment type="similarity">
    <text evidence="1">Belongs to the universal ribosomal protein uS2 family.</text>
</comment>
<evidence type="ECO:0000255" key="1">
    <source>
        <dbReference type="HAMAP-Rule" id="MF_00291"/>
    </source>
</evidence>
<evidence type="ECO:0000305" key="2"/>
<accession>A5UUV2</accession>
<gene>
    <name evidence="1" type="primary">rpsB</name>
    <name type="ordered locus">RoseRS_2019</name>
</gene>
<organism>
    <name type="scientific">Roseiflexus sp. (strain RS-1)</name>
    <dbReference type="NCBI Taxonomy" id="357808"/>
    <lineage>
        <taxon>Bacteria</taxon>
        <taxon>Bacillati</taxon>
        <taxon>Chloroflexota</taxon>
        <taxon>Chloroflexia</taxon>
        <taxon>Chloroflexales</taxon>
        <taxon>Roseiflexineae</taxon>
        <taxon>Roseiflexaceae</taxon>
        <taxon>Roseiflexus</taxon>
    </lineage>
</organism>
<sequence length="262" mass="29218">MTQGAQRLVSMRALLESGAHFGHQTKRWNPKMRPYIFTARNGIHIIDLQKTITGLTEAYQFIVETVAAGQKVLFVGTKKQAQETIAEEATRAGQFYVTQRWLGGTLTNFATMRKRLRYLNDLEDQRARGEFNKLTKAEALKLDAEIEKLNKVFGGMKTMDRLPGALFIVDPHKEALAVKEANKTGIPVVAMVDTNCDPDLIDYVIPCNDDAIRSIRLIAAKIADAAIEGQNRRESLQADVHGAGYEQEMTAQLIAREAEAVE</sequence>
<feature type="chain" id="PRO_0000352032" description="Small ribosomal subunit protein uS2">
    <location>
        <begin position="1"/>
        <end position="262"/>
    </location>
</feature>
<proteinExistence type="inferred from homology"/>
<reference key="1">
    <citation type="submission" date="2007-04" db="EMBL/GenBank/DDBJ databases">
        <title>Complete sequence of Roseiflexus sp. RS-1.</title>
        <authorList>
            <consortium name="US DOE Joint Genome Institute"/>
            <person name="Copeland A."/>
            <person name="Lucas S."/>
            <person name="Lapidus A."/>
            <person name="Barry K."/>
            <person name="Detter J.C."/>
            <person name="Glavina del Rio T."/>
            <person name="Hammon N."/>
            <person name="Israni S."/>
            <person name="Dalin E."/>
            <person name="Tice H."/>
            <person name="Pitluck S."/>
            <person name="Chertkov O."/>
            <person name="Brettin T."/>
            <person name="Bruce D."/>
            <person name="Han C."/>
            <person name="Schmutz J."/>
            <person name="Larimer F."/>
            <person name="Land M."/>
            <person name="Hauser L."/>
            <person name="Kyrpides N."/>
            <person name="Mikhailova N."/>
            <person name="Bryant D.A."/>
            <person name="Richardson P."/>
        </authorList>
    </citation>
    <scope>NUCLEOTIDE SEQUENCE [LARGE SCALE GENOMIC DNA]</scope>
    <source>
        <strain>RS-1</strain>
    </source>
</reference>
<keyword id="KW-0687">Ribonucleoprotein</keyword>
<keyword id="KW-0689">Ribosomal protein</keyword>